<reference key="1">
    <citation type="journal article" date="2007" name="Nat. Biotechnol.">
        <title>Complete genome sequence of the erythromycin-producing bacterium Saccharopolyspora erythraea NRRL23338.</title>
        <authorList>
            <person name="Oliynyk M."/>
            <person name="Samborskyy M."/>
            <person name="Lester J.B."/>
            <person name="Mironenko T."/>
            <person name="Scott N."/>
            <person name="Dickens S."/>
            <person name="Haydock S.F."/>
            <person name="Leadlay P.F."/>
        </authorList>
    </citation>
    <scope>NUCLEOTIDE SEQUENCE [LARGE SCALE GENOMIC DNA]</scope>
    <source>
        <strain>ATCC 11635 / DSM 40517 / JCM 4748 / NBRC 13426 / NCIMB 8594 / NRRL 2338</strain>
    </source>
</reference>
<gene>
    <name type="ordered locus">SACE_6507</name>
</gene>
<keyword id="KW-0963">Cytoplasm</keyword>
<keyword id="KW-0378">Hydrolase</keyword>
<keyword id="KW-0546">Nucleotide metabolism</keyword>
<keyword id="KW-1185">Reference proteome</keyword>
<comment type="function">
    <text evidence="1">Nucleoside triphosphate pyrophosphatase. May have a dual role in cell division arrest and in preventing the incorporation of modified nucleotides into cellular nucleic acids.</text>
</comment>
<comment type="catalytic activity">
    <reaction evidence="1">
        <text>a ribonucleoside 5'-triphosphate + H2O = a ribonucleoside 5'-phosphate + diphosphate + H(+)</text>
        <dbReference type="Rhea" id="RHEA:23996"/>
        <dbReference type="ChEBI" id="CHEBI:15377"/>
        <dbReference type="ChEBI" id="CHEBI:15378"/>
        <dbReference type="ChEBI" id="CHEBI:33019"/>
        <dbReference type="ChEBI" id="CHEBI:58043"/>
        <dbReference type="ChEBI" id="CHEBI:61557"/>
        <dbReference type="EC" id="3.6.1.9"/>
    </reaction>
</comment>
<comment type="catalytic activity">
    <reaction evidence="1">
        <text>a 2'-deoxyribonucleoside 5'-triphosphate + H2O = a 2'-deoxyribonucleoside 5'-phosphate + diphosphate + H(+)</text>
        <dbReference type="Rhea" id="RHEA:44644"/>
        <dbReference type="ChEBI" id="CHEBI:15377"/>
        <dbReference type="ChEBI" id="CHEBI:15378"/>
        <dbReference type="ChEBI" id="CHEBI:33019"/>
        <dbReference type="ChEBI" id="CHEBI:61560"/>
        <dbReference type="ChEBI" id="CHEBI:65317"/>
        <dbReference type="EC" id="3.6.1.9"/>
    </reaction>
</comment>
<comment type="cofactor">
    <cofactor evidence="1">
        <name>a divalent metal cation</name>
        <dbReference type="ChEBI" id="CHEBI:60240"/>
    </cofactor>
</comment>
<comment type="subcellular location">
    <subcellularLocation>
        <location evidence="1">Cytoplasm</location>
    </subcellularLocation>
</comment>
<comment type="similarity">
    <text evidence="1">Belongs to the Maf family.</text>
</comment>
<dbReference type="EC" id="3.6.1.9" evidence="1"/>
<dbReference type="EMBL" id="AM420293">
    <property type="protein sequence ID" value="CAM05676.1"/>
    <property type="molecule type" value="Genomic_DNA"/>
</dbReference>
<dbReference type="RefSeq" id="WP_009950967.1">
    <property type="nucleotide sequence ID" value="NC_009142.1"/>
</dbReference>
<dbReference type="SMR" id="A4FNQ1"/>
<dbReference type="STRING" id="405948.SACE_6507"/>
<dbReference type="KEGG" id="sen:SACE_6507"/>
<dbReference type="eggNOG" id="COG0424">
    <property type="taxonomic scope" value="Bacteria"/>
</dbReference>
<dbReference type="HOGENOM" id="CLU_040416_1_2_11"/>
<dbReference type="OrthoDB" id="3527985at2"/>
<dbReference type="Proteomes" id="UP000006728">
    <property type="component" value="Chromosome"/>
</dbReference>
<dbReference type="GO" id="GO:0005737">
    <property type="term" value="C:cytoplasm"/>
    <property type="evidence" value="ECO:0007669"/>
    <property type="project" value="UniProtKB-SubCell"/>
</dbReference>
<dbReference type="GO" id="GO:0047429">
    <property type="term" value="F:nucleoside triphosphate diphosphatase activity"/>
    <property type="evidence" value="ECO:0007669"/>
    <property type="project" value="UniProtKB-EC"/>
</dbReference>
<dbReference type="GO" id="GO:0009117">
    <property type="term" value="P:nucleotide metabolic process"/>
    <property type="evidence" value="ECO:0007669"/>
    <property type="project" value="UniProtKB-KW"/>
</dbReference>
<dbReference type="CDD" id="cd00555">
    <property type="entry name" value="Maf"/>
    <property type="match status" value="1"/>
</dbReference>
<dbReference type="Gene3D" id="3.90.950.10">
    <property type="match status" value="1"/>
</dbReference>
<dbReference type="HAMAP" id="MF_00528">
    <property type="entry name" value="Maf"/>
    <property type="match status" value="1"/>
</dbReference>
<dbReference type="InterPro" id="IPR029001">
    <property type="entry name" value="ITPase-like_fam"/>
</dbReference>
<dbReference type="InterPro" id="IPR003697">
    <property type="entry name" value="Maf-like"/>
</dbReference>
<dbReference type="NCBIfam" id="TIGR00172">
    <property type="entry name" value="maf"/>
    <property type="match status" value="1"/>
</dbReference>
<dbReference type="PANTHER" id="PTHR43213">
    <property type="entry name" value="BIFUNCTIONAL DTTP/UTP PYROPHOSPHATASE/METHYLTRANSFERASE PROTEIN-RELATED"/>
    <property type="match status" value="1"/>
</dbReference>
<dbReference type="PANTHER" id="PTHR43213:SF5">
    <property type="entry name" value="BIFUNCTIONAL DTTP_UTP PYROPHOSPHATASE_METHYLTRANSFERASE PROTEIN-RELATED"/>
    <property type="match status" value="1"/>
</dbReference>
<dbReference type="Pfam" id="PF02545">
    <property type="entry name" value="Maf"/>
    <property type="match status" value="1"/>
</dbReference>
<dbReference type="PIRSF" id="PIRSF006305">
    <property type="entry name" value="Maf"/>
    <property type="match status" value="1"/>
</dbReference>
<dbReference type="SUPFAM" id="SSF52972">
    <property type="entry name" value="ITPase-like"/>
    <property type="match status" value="1"/>
</dbReference>
<organism>
    <name type="scientific">Saccharopolyspora erythraea (strain ATCC 11635 / DSM 40517 / JCM 4748 / NBRC 13426 / NCIMB 8594 / NRRL 2338)</name>
    <dbReference type="NCBI Taxonomy" id="405948"/>
    <lineage>
        <taxon>Bacteria</taxon>
        <taxon>Bacillati</taxon>
        <taxon>Actinomycetota</taxon>
        <taxon>Actinomycetes</taxon>
        <taxon>Pseudonocardiales</taxon>
        <taxon>Pseudonocardiaceae</taxon>
        <taxon>Saccharopolyspora</taxon>
    </lineage>
</organism>
<protein>
    <recommendedName>
        <fullName evidence="1">Nucleoside triphosphate pyrophosphatase</fullName>
        <ecNumber evidence="1">3.6.1.9</ecNumber>
    </recommendedName>
    <alternativeName>
        <fullName evidence="1">Nucleotide pyrophosphatase</fullName>
        <shortName evidence="1">Nucleotide PPase</shortName>
    </alternativeName>
</protein>
<evidence type="ECO:0000255" key="1">
    <source>
        <dbReference type="HAMAP-Rule" id="MF_00528"/>
    </source>
</evidence>
<accession>A4FNQ1</accession>
<sequence length="211" mass="21430">MRFVLASASPARLSVLRSAGIDPLVRVSGVDEDAVAAGLTDPTPPELVTALAAAKAEAVLPAVAAEAPDAVVVGCDSMLSAPDGEIVGKPGTPQAAAERWRKAAGRSGELLTGHAVVVLRGGEVVARTQGHLATTVRFSEPTEAELDAYIATGEPLHVAGGFTLEGFGGWFIEGVDGDPSSVLGISLPLTRKLLAEVGVSVVTLWGPPVAR</sequence>
<feature type="chain" id="PRO_1000060963" description="Nucleoside triphosphate pyrophosphatase">
    <location>
        <begin position="1"/>
        <end position="211"/>
    </location>
</feature>
<feature type="active site" description="Proton acceptor" evidence="1">
    <location>
        <position position="76"/>
    </location>
</feature>
<name>NTPP_SACEN</name>
<proteinExistence type="inferred from homology"/>